<dbReference type="EMBL" id="AE000512">
    <property type="protein sequence ID" value="AAD36433.1"/>
    <property type="molecule type" value="Genomic_DNA"/>
</dbReference>
<dbReference type="PIR" id="D72263">
    <property type="entry name" value="D72263"/>
</dbReference>
<dbReference type="RefSeq" id="NP_229164.1">
    <property type="nucleotide sequence ID" value="NC_000853.1"/>
</dbReference>
<dbReference type="RefSeq" id="WP_004081559.1">
    <property type="nucleotide sequence ID" value="NC_000853.1"/>
</dbReference>
<dbReference type="PDB" id="1RQ0">
    <property type="method" value="X-ray"/>
    <property type="resolution" value="2.65 A"/>
    <property type="chains" value="A/B/C=1-342"/>
</dbReference>
<dbReference type="PDB" id="2FVO">
    <property type="method" value="EM"/>
    <property type="resolution" value="12.80 A"/>
    <property type="chains" value="A=1-333"/>
</dbReference>
<dbReference type="PDBsum" id="1RQ0"/>
<dbReference type="PDBsum" id="2FVO"/>
<dbReference type="SMR" id="Q9X183"/>
<dbReference type="FunCoup" id="Q9X183">
    <property type="interactions" value="348"/>
</dbReference>
<dbReference type="STRING" id="243274.TM_1363"/>
<dbReference type="PaxDb" id="243274-THEMA_07525"/>
<dbReference type="EnsemblBacteria" id="AAD36433">
    <property type="protein sequence ID" value="AAD36433"/>
    <property type="gene ID" value="TM_1363"/>
</dbReference>
<dbReference type="KEGG" id="tma:TM1363"/>
<dbReference type="KEGG" id="tmi:THEMA_07525"/>
<dbReference type="KEGG" id="tmm:Tmari_1370"/>
<dbReference type="KEGG" id="tmw:THMA_1388"/>
<dbReference type="eggNOG" id="COG0216">
    <property type="taxonomic scope" value="Bacteria"/>
</dbReference>
<dbReference type="InParanoid" id="Q9X183"/>
<dbReference type="OrthoDB" id="9806673at2"/>
<dbReference type="EvolutionaryTrace" id="Q9X183"/>
<dbReference type="Proteomes" id="UP000008183">
    <property type="component" value="Chromosome"/>
</dbReference>
<dbReference type="GO" id="GO:0005737">
    <property type="term" value="C:cytoplasm"/>
    <property type="evidence" value="ECO:0007669"/>
    <property type="project" value="UniProtKB-SubCell"/>
</dbReference>
<dbReference type="GO" id="GO:0016149">
    <property type="term" value="F:translation release factor activity, codon specific"/>
    <property type="evidence" value="ECO:0007669"/>
    <property type="project" value="UniProtKB-UniRule"/>
</dbReference>
<dbReference type="FunFam" id="3.30.70.1660:FF:000002">
    <property type="entry name" value="Peptide chain release factor 1"/>
    <property type="match status" value="1"/>
</dbReference>
<dbReference type="FunFam" id="3.30.70.1660:FF:000004">
    <property type="entry name" value="Peptide chain release factor 1"/>
    <property type="match status" value="1"/>
</dbReference>
<dbReference type="FunFam" id="3.30.160.20:FF:000070">
    <property type="entry name" value="Related to MRF1-peptide chain release factor, mitochondrial"/>
    <property type="match status" value="1"/>
</dbReference>
<dbReference type="Gene3D" id="3.30.160.20">
    <property type="match status" value="1"/>
</dbReference>
<dbReference type="Gene3D" id="3.30.70.1660">
    <property type="match status" value="1"/>
</dbReference>
<dbReference type="Gene3D" id="6.10.140.160">
    <property type="match status" value="1"/>
</dbReference>
<dbReference type="HAMAP" id="MF_00093">
    <property type="entry name" value="Rel_fac_1"/>
    <property type="match status" value="1"/>
</dbReference>
<dbReference type="InterPro" id="IPR005139">
    <property type="entry name" value="PCRF"/>
</dbReference>
<dbReference type="InterPro" id="IPR000352">
    <property type="entry name" value="Pep_chain_release_fac_I"/>
</dbReference>
<dbReference type="InterPro" id="IPR045853">
    <property type="entry name" value="Pep_chain_release_fac_I_sf"/>
</dbReference>
<dbReference type="InterPro" id="IPR050057">
    <property type="entry name" value="Prokaryotic/Mito_RF"/>
</dbReference>
<dbReference type="InterPro" id="IPR004373">
    <property type="entry name" value="RF-1"/>
</dbReference>
<dbReference type="NCBIfam" id="TIGR00019">
    <property type="entry name" value="prfA"/>
    <property type="match status" value="1"/>
</dbReference>
<dbReference type="NCBIfam" id="NF001859">
    <property type="entry name" value="PRK00591.1"/>
    <property type="match status" value="1"/>
</dbReference>
<dbReference type="PANTHER" id="PTHR43804">
    <property type="entry name" value="LD18447P"/>
    <property type="match status" value="1"/>
</dbReference>
<dbReference type="PANTHER" id="PTHR43804:SF7">
    <property type="entry name" value="LD18447P"/>
    <property type="match status" value="1"/>
</dbReference>
<dbReference type="Pfam" id="PF03462">
    <property type="entry name" value="PCRF"/>
    <property type="match status" value="1"/>
</dbReference>
<dbReference type="Pfam" id="PF00472">
    <property type="entry name" value="RF-1"/>
    <property type="match status" value="1"/>
</dbReference>
<dbReference type="SMART" id="SM00937">
    <property type="entry name" value="PCRF"/>
    <property type="match status" value="1"/>
</dbReference>
<dbReference type="SUPFAM" id="SSF75620">
    <property type="entry name" value="Release factor"/>
    <property type="match status" value="1"/>
</dbReference>
<dbReference type="PROSITE" id="PS00745">
    <property type="entry name" value="RF_PROK_I"/>
    <property type="match status" value="1"/>
</dbReference>
<organism>
    <name type="scientific">Thermotoga maritima (strain ATCC 43589 / DSM 3109 / JCM 10099 / NBRC 100826 / MSB8)</name>
    <dbReference type="NCBI Taxonomy" id="243274"/>
    <lineage>
        <taxon>Bacteria</taxon>
        <taxon>Thermotogati</taxon>
        <taxon>Thermotogota</taxon>
        <taxon>Thermotogae</taxon>
        <taxon>Thermotogales</taxon>
        <taxon>Thermotogaceae</taxon>
        <taxon>Thermotoga</taxon>
    </lineage>
</organism>
<sequence>MKEKKKEIEKLLARPDLTPEQMKNYGMEYAKIEEIENITNRIKETQEFIELLREEGENELEIEKYEKELDQLYQELLFLLSPEASDKAIVEIRPGTGGEEAALFARDLFRMYTRYAERKGWNLEVAEIHETDLGGIREVVFFVKGKNAYGILKYESGVHRVQRVPVTESGGRIHTSTATVAVLPEIEEKDIEIRPEDLKIETFRASGHGGQYVNKTESAVRITHLPTGIVVSCQNERSQYQNKQTALRILRARLYQLQKEQKEREISQKRKSQIGTGERSEKIRTYNFPQNRVTDHRINYTSYRLQEILDGDLDEIISKLIEHDIENNLEEVLGIGASVEEK</sequence>
<comment type="function">
    <text evidence="1">Peptide chain release factor 1 directs the termination of translation in response to the peptide chain termination codons UAG and UAA.</text>
</comment>
<comment type="subcellular location">
    <subcellularLocation>
        <location evidence="1">Cytoplasm</location>
    </subcellularLocation>
</comment>
<comment type="PTM">
    <text evidence="1">Methylated by PrmC. Methylation increases the termination efficiency of RF1 (By similarity).</text>
</comment>
<comment type="similarity">
    <text evidence="3">Belongs to the prokaryotic/mitochondrial release factor family.</text>
</comment>
<keyword id="KW-0002">3D-structure</keyword>
<keyword id="KW-0963">Cytoplasm</keyword>
<keyword id="KW-0488">Methylation</keyword>
<keyword id="KW-0648">Protein biosynthesis</keyword>
<keyword id="KW-1185">Reference proteome</keyword>
<gene>
    <name type="primary">prfA</name>
    <name type="ordered locus">TM_1363</name>
</gene>
<evidence type="ECO:0000250" key="1"/>
<evidence type="ECO:0000256" key="2">
    <source>
        <dbReference type="SAM" id="MobiDB-lite"/>
    </source>
</evidence>
<evidence type="ECO:0000305" key="3"/>
<evidence type="ECO:0007829" key="4">
    <source>
        <dbReference type="PDB" id="1RQ0"/>
    </source>
</evidence>
<feature type="chain" id="PRO_0000177761" description="Peptide chain release factor 1">
    <location>
        <begin position="1"/>
        <end position="342"/>
    </location>
</feature>
<feature type="region of interest" description="Disordered" evidence="2">
    <location>
        <begin position="262"/>
        <end position="282"/>
    </location>
</feature>
<feature type="modified residue" description="N5-methylglutamine" evidence="1">
    <location>
        <position position="211"/>
    </location>
</feature>
<feature type="turn" evidence="4">
    <location>
        <begin position="2"/>
        <end position="6"/>
    </location>
</feature>
<feature type="helix" evidence="4">
    <location>
        <begin position="7"/>
        <end position="13"/>
    </location>
</feature>
<feature type="helix" evidence="4">
    <location>
        <begin position="19"/>
        <end position="49"/>
    </location>
</feature>
<feature type="turn" evidence="4">
    <location>
        <begin position="50"/>
        <end position="57"/>
    </location>
</feature>
<feature type="helix" evidence="4">
    <location>
        <begin position="62"/>
        <end position="80"/>
    </location>
</feature>
<feature type="strand" evidence="4">
    <location>
        <begin position="86"/>
        <end position="94"/>
    </location>
</feature>
<feature type="helix" evidence="4">
    <location>
        <begin position="99"/>
        <end position="119"/>
    </location>
</feature>
<feature type="strand" evidence="4">
    <location>
        <begin position="122"/>
        <end position="130"/>
    </location>
</feature>
<feature type="strand" evidence="4">
    <location>
        <begin position="136"/>
        <end position="145"/>
    </location>
</feature>
<feature type="helix" evidence="4">
    <location>
        <begin position="148"/>
        <end position="152"/>
    </location>
</feature>
<feature type="helix" evidence="4">
    <location>
        <begin position="153"/>
        <end position="155"/>
    </location>
</feature>
<feature type="strand" evidence="4">
    <location>
        <begin position="157"/>
        <end position="163"/>
    </location>
</feature>
<feature type="strand" evidence="4">
    <location>
        <begin position="174"/>
        <end position="184"/>
    </location>
</feature>
<feature type="helix" evidence="4">
    <location>
        <begin position="188"/>
        <end position="190"/>
    </location>
</feature>
<feature type="helix" evidence="4">
    <location>
        <begin position="195"/>
        <end position="197"/>
    </location>
</feature>
<feature type="strand" evidence="4">
    <location>
        <begin position="198"/>
        <end position="203"/>
    </location>
</feature>
<feature type="strand" evidence="4">
    <location>
        <begin position="214"/>
        <end position="224"/>
    </location>
</feature>
<feature type="turn" evidence="4">
    <location>
        <begin position="225"/>
        <end position="227"/>
    </location>
</feature>
<feature type="strand" evidence="4">
    <location>
        <begin position="230"/>
        <end position="237"/>
    </location>
</feature>
<feature type="helix" evidence="4">
    <location>
        <begin position="239"/>
        <end position="263"/>
    </location>
</feature>
<feature type="turn" evidence="4">
    <location>
        <begin position="264"/>
        <end position="266"/>
    </location>
</feature>
<feature type="strand" evidence="4">
    <location>
        <begin position="282"/>
        <end position="287"/>
    </location>
</feature>
<feature type="turn" evidence="4">
    <location>
        <begin position="288"/>
        <end position="291"/>
    </location>
</feature>
<feature type="strand" evidence="4">
    <location>
        <begin position="292"/>
        <end position="295"/>
    </location>
</feature>
<feature type="turn" evidence="4">
    <location>
        <begin position="296"/>
        <end position="299"/>
    </location>
</feature>
<feature type="strand" evidence="4">
    <location>
        <begin position="300"/>
        <end position="303"/>
    </location>
</feature>
<feature type="helix" evidence="4">
    <location>
        <begin position="305"/>
        <end position="309"/>
    </location>
</feature>
<feature type="helix" evidence="4">
    <location>
        <begin position="314"/>
        <end position="325"/>
    </location>
</feature>
<feature type="turn" evidence="4">
    <location>
        <begin position="326"/>
        <end position="328"/>
    </location>
</feature>
<feature type="helix" evidence="4">
    <location>
        <begin position="329"/>
        <end position="332"/>
    </location>
</feature>
<proteinExistence type="evidence at protein level"/>
<accession>Q9X183</accession>
<protein>
    <recommendedName>
        <fullName>Peptide chain release factor 1</fullName>
        <shortName>RF-1</shortName>
    </recommendedName>
</protein>
<name>RF1_THEMA</name>
<reference key="1">
    <citation type="journal article" date="1999" name="Nature">
        <title>Evidence for lateral gene transfer between Archaea and Bacteria from genome sequence of Thermotoga maritima.</title>
        <authorList>
            <person name="Nelson K.E."/>
            <person name="Clayton R.A."/>
            <person name="Gill S.R."/>
            <person name="Gwinn M.L."/>
            <person name="Dodson R.J."/>
            <person name="Haft D.H."/>
            <person name="Hickey E.K."/>
            <person name="Peterson J.D."/>
            <person name="Nelson W.C."/>
            <person name="Ketchum K.A."/>
            <person name="McDonald L.A."/>
            <person name="Utterback T.R."/>
            <person name="Malek J.A."/>
            <person name="Linher K.D."/>
            <person name="Garrett M.M."/>
            <person name="Stewart A.M."/>
            <person name="Cotton M.D."/>
            <person name="Pratt M.S."/>
            <person name="Phillips C.A."/>
            <person name="Richardson D.L."/>
            <person name="Heidelberg J.F."/>
            <person name="Sutton G.G."/>
            <person name="Fleischmann R.D."/>
            <person name="Eisen J.A."/>
            <person name="White O."/>
            <person name="Salzberg S.L."/>
            <person name="Smith H.O."/>
            <person name="Venter J.C."/>
            <person name="Fraser C.M."/>
        </authorList>
    </citation>
    <scope>NUCLEOTIDE SEQUENCE [LARGE SCALE GENOMIC DNA]</scope>
    <source>
        <strain>ATCC 43589 / DSM 3109 / JCM 10099 / NBRC 100826 / MSB8</strain>
    </source>
</reference>